<protein>
    <recommendedName>
        <fullName evidence="1">3-dehydroquinate dehydratase</fullName>
        <shortName evidence="1">3-dehydroquinase</shortName>
        <ecNumber evidence="1">4.2.1.10</ecNumber>
    </recommendedName>
    <alternativeName>
        <fullName evidence="1">Type II DHQase</fullName>
    </alternativeName>
</protein>
<name>AROQ_KLEP3</name>
<reference key="1">
    <citation type="journal article" date="2008" name="PLoS Genet.">
        <title>Complete genome sequence of the N2-fixing broad host range endophyte Klebsiella pneumoniae 342 and virulence predictions verified in mice.</title>
        <authorList>
            <person name="Fouts D.E."/>
            <person name="Tyler H.L."/>
            <person name="DeBoy R.T."/>
            <person name="Daugherty S."/>
            <person name="Ren Q."/>
            <person name="Badger J.H."/>
            <person name="Durkin A.S."/>
            <person name="Huot H."/>
            <person name="Shrivastava S."/>
            <person name="Kothari S."/>
            <person name="Dodson R.J."/>
            <person name="Mohamoud Y."/>
            <person name="Khouri H."/>
            <person name="Roesch L.F.W."/>
            <person name="Krogfelt K.A."/>
            <person name="Struve C."/>
            <person name="Triplett E.W."/>
            <person name="Methe B.A."/>
        </authorList>
    </citation>
    <scope>NUCLEOTIDE SEQUENCE [LARGE SCALE GENOMIC DNA]</scope>
    <source>
        <strain>342</strain>
    </source>
</reference>
<organism>
    <name type="scientific">Klebsiella pneumoniae (strain 342)</name>
    <dbReference type="NCBI Taxonomy" id="507522"/>
    <lineage>
        <taxon>Bacteria</taxon>
        <taxon>Pseudomonadati</taxon>
        <taxon>Pseudomonadota</taxon>
        <taxon>Gammaproteobacteria</taxon>
        <taxon>Enterobacterales</taxon>
        <taxon>Enterobacteriaceae</taxon>
        <taxon>Klebsiella/Raoultella group</taxon>
        <taxon>Klebsiella</taxon>
        <taxon>Klebsiella pneumoniae complex</taxon>
    </lineage>
</organism>
<sequence>MADKFHILLLNGPNINMLGTREPDKYGTLSLAEIVNRLTSEAAALNVSLDHLQSNAEYALIDRIHQAKDNVDYILINPAAFAHTSVAIRDALLAVNIPFIEIHLSNVHAREPFRQHSYLSDVAAGVICGLGADGYSYALQTAVKRLSQSH</sequence>
<feature type="chain" id="PRO_1000097606" description="3-dehydroquinate dehydratase">
    <location>
        <begin position="1"/>
        <end position="150"/>
    </location>
</feature>
<feature type="active site" description="Proton acceptor" evidence="1">
    <location>
        <position position="26"/>
    </location>
</feature>
<feature type="active site" description="Proton donor" evidence="1">
    <location>
        <position position="103"/>
    </location>
</feature>
<feature type="binding site" evidence="1">
    <location>
        <position position="77"/>
    </location>
    <ligand>
        <name>substrate</name>
    </ligand>
</feature>
<feature type="binding site" evidence="1">
    <location>
        <position position="83"/>
    </location>
    <ligand>
        <name>substrate</name>
    </ligand>
</feature>
<feature type="binding site" evidence="1">
    <location>
        <position position="90"/>
    </location>
    <ligand>
        <name>substrate</name>
    </ligand>
</feature>
<feature type="binding site" evidence="1">
    <location>
        <begin position="104"/>
        <end position="105"/>
    </location>
    <ligand>
        <name>substrate</name>
    </ligand>
</feature>
<feature type="binding site" evidence="1">
    <location>
        <position position="114"/>
    </location>
    <ligand>
        <name>substrate</name>
    </ligand>
</feature>
<feature type="site" description="Transition state stabilizer" evidence="1">
    <location>
        <position position="21"/>
    </location>
</feature>
<proteinExistence type="inferred from homology"/>
<accession>B5XNE4</accession>
<comment type="function">
    <text evidence="1">Catalyzes a trans-dehydration via an enolate intermediate.</text>
</comment>
<comment type="catalytic activity">
    <reaction evidence="1">
        <text>3-dehydroquinate = 3-dehydroshikimate + H2O</text>
        <dbReference type="Rhea" id="RHEA:21096"/>
        <dbReference type="ChEBI" id="CHEBI:15377"/>
        <dbReference type="ChEBI" id="CHEBI:16630"/>
        <dbReference type="ChEBI" id="CHEBI:32364"/>
        <dbReference type="EC" id="4.2.1.10"/>
    </reaction>
</comment>
<comment type="pathway">
    <text evidence="1">Metabolic intermediate biosynthesis; chorismate biosynthesis; chorismate from D-erythrose 4-phosphate and phosphoenolpyruvate: step 3/7.</text>
</comment>
<comment type="subunit">
    <text evidence="1">Homododecamer.</text>
</comment>
<comment type="similarity">
    <text evidence="1">Belongs to the type-II 3-dehydroquinase family.</text>
</comment>
<gene>
    <name evidence="1" type="primary">aroQ</name>
    <name type="ordered locus">KPK_0454</name>
</gene>
<keyword id="KW-0028">Amino-acid biosynthesis</keyword>
<keyword id="KW-0057">Aromatic amino acid biosynthesis</keyword>
<keyword id="KW-0456">Lyase</keyword>
<dbReference type="EC" id="4.2.1.10" evidence="1"/>
<dbReference type="EMBL" id="CP000964">
    <property type="protein sequence ID" value="ACI10752.1"/>
    <property type="molecule type" value="Genomic_DNA"/>
</dbReference>
<dbReference type="SMR" id="B5XNE4"/>
<dbReference type="KEGG" id="kpe:KPK_0454"/>
<dbReference type="HOGENOM" id="CLU_090968_1_0_6"/>
<dbReference type="UniPathway" id="UPA00053">
    <property type="reaction ID" value="UER00086"/>
</dbReference>
<dbReference type="Proteomes" id="UP000001734">
    <property type="component" value="Chromosome"/>
</dbReference>
<dbReference type="GO" id="GO:0003855">
    <property type="term" value="F:3-dehydroquinate dehydratase activity"/>
    <property type="evidence" value="ECO:0007669"/>
    <property type="project" value="UniProtKB-UniRule"/>
</dbReference>
<dbReference type="GO" id="GO:0008652">
    <property type="term" value="P:amino acid biosynthetic process"/>
    <property type="evidence" value="ECO:0007669"/>
    <property type="project" value="UniProtKB-KW"/>
</dbReference>
<dbReference type="GO" id="GO:0009073">
    <property type="term" value="P:aromatic amino acid family biosynthetic process"/>
    <property type="evidence" value="ECO:0007669"/>
    <property type="project" value="UniProtKB-KW"/>
</dbReference>
<dbReference type="GO" id="GO:0009423">
    <property type="term" value="P:chorismate biosynthetic process"/>
    <property type="evidence" value="ECO:0007669"/>
    <property type="project" value="UniProtKB-UniRule"/>
</dbReference>
<dbReference type="GO" id="GO:0019631">
    <property type="term" value="P:quinate catabolic process"/>
    <property type="evidence" value="ECO:0007669"/>
    <property type="project" value="TreeGrafter"/>
</dbReference>
<dbReference type="CDD" id="cd00466">
    <property type="entry name" value="DHQase_II"/>
    <property type="match status" value="1"/>
</dbReference>
<dbReference type="Gene3D" id="3.40.50.9100">
    <property type="entry name" value="Dehydroquinase, class II"/>
    <property type="match status" value="1"/>
</dbReference>
<dbReference type="HAMAP" id="MF_00169">
    <property type="entry name" value="AroQ"/>
    <property type="match status" value="1"/>
</dbReference>
<dbReference type="InterPro" id="IPR001874">
    <property type="entry name" value="DHquinase_II"/>
</dbReference>
<dbReference type="InterPro" id="IPR018509">
    <property type="entry name" value="DHquinase_II_CS"/>
</dbReference>
<dbReference type="InterPro" id="IPR036441">
    <property type="entry name" value="DHquinase_II_sf"/>
</dbReference>
<dbReference type="NCBIfam" id="TIGR01088">
    <property type="entry name" value="aroQ"/>
    <property type="match status" value="1"/>
</dbReference>
<dbReference type="NCBIfam" id="NF003804">
    <property type="entry name" value="PRK05395.1-1"/>
    <property type="match status" value="1"/>
</dbReference>
<dbReference type="NCBIfam" id="NF003805">
    <property type="entry name" value="PRK05395.1-2"/>
    <property type="match status" value="1"/>
</dbReference>
<dbReference type="NCBIfam" id="NF003806">
    <property type="entry name" value="PRK05395.1-3"/>
    <property type="match status" value="1"/>
</dbReference>
<dbReference type="NCBIfam" id="NF003807">
    <property type="entry name" value="PRK05395.1-4"/>
    <property type="match status" value="1"/>
</dbReference>
<dbReference type="PANTHER" id="PTHR21272">
    <property type="entry name" value="CATABOLIC 3-DEHYDROQUINASE"/>
    <property type="match status" value="1"/>
</dbReference>
<dbReference type="PANTHER" id="PTHR21272:SF3">
    <property type="entry name" value="CATABOLIC 3-DEHYDROQUINASE"/>
    <property type="match status" value="1"/>
</dbReference>
<dbReference type="Pfam" id="PF01220">
    <property type="entry name" value="DHquinase_II"/>
    <property type="match status" value="1"/>
</dbReference>
<dbReference type="PIRSF" id="PIRSF001399">
    <property type="entry name" value="DHquinase_II"/>
    <property type="match status" value="1"/>
</dbReference>
<dbReference type="SUPFAM" id="SSF52304">
    <property type="entry name" value="Type II 3-dehydroquinate dehydratase"/>
    <property type="match status" value="1"/>
</dbReference>
<dbReference type="PROSITE" id="PS01029">
    <property type="entry name" value="DEHYDROQUINASE_II"/>
    <property type="match status" value="1"/>
</dbReference>
<evidence type="ECO:0000255" key="1">
    <source>
        <dbReference type="HAMAP-Rule" id="MF_00169"/>
    </source>
</evidence>